<feature type="chain" id="PRO_0000327260" description="Ankyrin repeat and sterile alpha motif domain-containing protein 1B">
    <location>
        <begin position="1"/>
        <end position="1259"/>
    </location>
</feature>
<feature type="repeat" description="ANK 1">
    <location>
        <begin position="2"/>
        <end position="31"/>
    </location>
</feature>
<feature type="repeat" description="ANK 2">
    <location>
        <begin position="58"/>
        <end position="87"/>
    </location>
</feature>
<feature type="repeat" description="ANK 3">
    <location>
        <begin position="91"/>
        <end position="120"/>
    </location>
</feature>
<feature type="repeat" description="ANK 4">
    <location>
        <begin position="127"/>
        <end position="156"/>
    </location>
</feature>
<feature type="repeat" description="ANK 5">
    <location>
        <begin position="160"/>
        <end position="189"/>
    </location>
</feature>
<feature type="repeat" description="ANK 6">
    <location>
        <begin position="193"/>
        <end position="222"/>
    </location>
</feature>
<feature type="repeat" description="ANK 7">
    <location>
        <begin position="225"/>
        <end position="254"/>
    </location>
</feature>
<feature type="domain" description="SAM 1" evidence="4">
    <location>
        <begin position="809"/>
        <end position="875"/>
    </location>
</feature>
<feature type="domain" description="SAM 2" evidence="4">
    <location>
        <begin position="883"/>
        <end position="948"/>
    </location>
</feature>
<feature type="domain" description="PID" evidence="3">
    <location>
        <begin position="1055"/>
        <end position="1212"/>
    </location>
</feature>
<feature type="region of interest" description="Disordered" evidence="5">
    <location>
        <begin position="298"/>
        <end position="325"/>
    </location>
</feature>
<feature type="region of interest" description="Disordered" evidence="5">
    <location>
        <begin position="367"/>
        <end position="401"/>
    </location>
</feature>
<feature type="region of interest" description="Disordered" evidence="5">
    <location>
        <begin position="490"/>
        <end position="513"/>
    </location>
</feature>
<feature type="region of interest" description="Disordered" evidence="5">
    <location>
        <begin position="556"/>
        <end position="614"/>
    </location>
</feature>
<feature type="region of interest" description="Disordered" evidence="5">
    <location>
        <begin position="631"/>
        <end position="661"/>
    </location>
</feature>
<feature type="region of interest" description="Disordered" evidence="5">
    <location>
        <begin position="753"/>
        <end position="776"/>
    </location>
</feature>
<feature type="region of interest" description="Disordered" evidence="5">
    <location>
        <begin position="943"/>
        <end position="988"/>
    </location>
</feature>
<feature type="region of interest" description="Disordered" evidence="5">
    <location>
        <begin position="1196"/>
        <end position="1216"/>
    </location>
</feature>
<feature type="short sequence motif" description="Nuclear localization signal" evidence="1">
    <location>
        <position position="934"/>
    </location>
</feature>
<feature type="compositionally biased region" description="Polar residues" evidence="5">
    <location>
        <begin position="306"/>
        <end position="325"/>
    </location>
</feature>
<feature type="compositionally biased region" description="Polar residues" evidence="5">
    <location>
        <begin position="371"/>
        <end position="384"/>
    </location>
</feature>
<feature type="compositionally biased region" description="Low complexity" evidence="5">
    <location>
        <begin position="556"/>
        <end position="574"/>
    </location>
</feature>
<feature type="compositionally biased region" description="Basic and acidic residues" evidence="5">
    <location>
        <begin position="575"/>
        <end position="587"/>
    </location>
</feature>
<feature type="compositionally biased region" description="Low complexity" evidence="5">
    <location>
        <begin position="968"/>
        <end position="983"/>
    </location>
</feature>
<feature type="modified residue" description="Phosphoserine" evidence="10">
    <location>
        <position position="310"/>
    </location>
</feature>
<feature type="modified residue" description="Phosphoserine" evidence="10">
    <location>
        <position position="311"/>
    </location>
</feature>
<feature type="modified residue" description="Phosphoserine" evidence="10">
    <location>
        <position position="315"/>
    </location>
</feature>
<feature type="modified residue" description="Phosphoserine" evidence="10">
    <location>
        <position position="353"/>
    </location>
</feature>
<feature type="modified residue" description="Phosphoserine" evidence="2">
    <location>
        <position position="364"/>
    </location>
</feature>
<feature type="modified residue" description="Phosphothreonine" evidence="10">
    <location>
        <position position="503"/>
    </location>
</feature>
<feature type="modified residue" description="Phosphoserine" evidence="10">
    <location>
        <position position="507"/>
    </location>
</feature>
<feature type="modified residue" description="Phosphoserine" evidence="10">
    <location>
        <position position="510"/>
    </location>
</feature>
<feature type="modified residue" description="Phosphoserine" evidence="10">
    <location>
        <position position="738"/>
    </location>
</feature>
<feature type="modified residue" description="Phosphothreonine" evidence="2">
    <location>
        <position position="772"/>
    </location>
</feature>
<feature type="modified residue" description="Phosphoserine" evidence="2">
    <location>
        <position position="774"/>
    </location>
</feature>
<feature type="modified residue" description="Phosphotyrosine" evidence="9">
    <location>
        <position position="900"/>
    </location>
</feature>
<feature type="modified residue" description="Phosphoserine" evidence="10">
    <location>
        <position position="973"/>
    </location>
</feature>
<feature type="modified residue" description="Phosphotyrosine" evidence="9">
    <location>
        <position position="1006"/>
    </location>
</feature>
<feature type="splice variant" id="VSP_032713" description="In isoform 5." evidence="7">
    <location>
        <begin position="1"/>
        <end position="993"/>
    </location>
</feature>
<feature type="splice variant" id="VSP_032714" description="In isoform 3." evidence="6">
    <location>
        <begin position="1"/>
        <end position="830"/>
    </location>
</feature>
<feature type="splice variant" id="VSP_032715" description="In isoform 2 and isoform 4." evidence="7">
    <location>
        <begin position="1"/>
        <end position="773"/>
    </location>
</feature>
<feature type="splice variant" id="VSP_032716" description="In isoform 2 and isoform 4." evidence="7">
    <original>SFTSEWEEIDKIMNSIDVGINSELEGMNGETTR</original>
    <variation>MMWQCHPSAPDYRYYPVDGYSLLKRFPLHPLTG</variation>
    <location>
        <begin position="774"/>
        <end position="806"/>
    </location>
</feature>
<feature type="splice variant" id="VSP_032717" description="In isoform 2." evidence="7">
    <location>
        <begin position="962"/>
        <end position="1021"/>
    </location>
</feature>
<feature type="splice variant" id="VSP_032718" description="In isoform 4." evidence="7">
    <original>EPSGNHTPPQLSPSLSQSTYTTGGSLDVPHIIMQGDARRRRNENYFDDIPRSKLERQMAQ</original>
    <variation>QSSVCEIWTNQNAGFPFSAIHQVHN</variation>
    <location>
        <begin position="962"/>
        <end position="1021"/>
    </location>
</feature>
<feature type="splice variant" id="VSP_032719" description="In isoform 3." evidence="6">
    <original>QIDPSEQKTLANLPWIVEPGQEAKRGINTKYETTIF</original>
    <variation>APQTSCPNRLV</variation>
    <location>
        <begin position="1224"/>
        <end position="1259"/>
    </location>
</feature>
<feature type="sequence conflict" description="In Ref. 1; BAC27677/BAC27761/BAC33978/BAE37478 and 3; AAH98373." evidence="8" ref="1 3">
    <original>R</original>
    <variation>Q</variation>
    <location>
        <position position="1092"/>
    </location>
</feature>
<gene>
    <name type="primary">Anks1b</name>
</gene>
<comment type="function">
    <text evidence="1">Isoform 2 may participate in the regulation of nucleoplasmic coilin protein interactions in neuronal and transformed cells.</text>
</comment>
<comment type="subunit">
    <text evidence="1">Interacts with EPHA8. Isoform 2 interacts with COIL (By similarity).</text>
</comment>
<comment type="subcellular location">
    <subcellularLocation>
        <location evidence="1">Cytoplasm</location>
    </subcellularLocation>
</comment>
<comment type="subcellular location">
    <molecule>Isoform 2</molecule>
    <subcellularLocation>
        <location evidence="1">Nucleus</location>
    </subcellularLocation>
</comment>
<comment type="subcellular location">
    <molecule>Isoform 4</molecule>
    <subcellularLocation>
        <location>Postsynaptic density</location>
    </subcellularLocation>
    <subcellularLocation>
        <location>Cell projection</location>
        <location>Dendritic spine</location>
    </subcellularLocation>
    <subcellularLocation>
        <location>Nucleus</location>
    </subcellularLocation>
</comment>
<comment type="alternative products">
    <event type="alternative splicing"/>
    <isoform>
        <id>Q8BIZ1-1</id>
        <name>1</name>
        <sequence type="displayed"/>
    </isoform>
    <isoform>
        <id>Q8BIZ1-2</id>
        <name>2</name>
        <sequence type="described" ref="VSP_032715 VSP_032716 VSP_032717"/>
    </isoform>
    <isoform>
        <id>Q8BIZ1-3</id>
        <name>3</name>
        <sequence type="described" ref="VSP_032714 VSP_032719"/>
    </isoform>
    <isoform>
        <id>Q8BIZ1-4</id>
        <name>4</name>
        <sequence type="described" ref="VSP_032715 VSP_032716 VSP_032718"/>
    </isoform>
    <isoform>
        <id>Q8BIZ1-5</id>
        <name>5</name>
        <sequence type="described" ref="VSP_032713"/>
    </isoform>
</comment>
<reference key="1">
    <citation type="journal article" date="2005" name="Science">
        <title>The transcriptional landscape of the mammalian genome.</title>
        <authorList>
            <person name="Carninci P."/>
            <person name="Kasukawa T."/>
            <person name="Katayama S."/>
            <person name="Gough J."/>
            <person name="Frith M.C."/>
            <person name="Maeda N."/>
            <person name="Oyama R."/>
            <person name="Ravasi T."/>
            <person name="Lenhard B."/>
            <person name="Wells C."/>
            <person name="Kodzius R."/>
            <person name="Shimokawa K."/>
            <person name="Bajic V.B."/>
            <person name="Brenner S.E."/>
            <person name="Batalov S."/>
            <person name="Forrest A.R."/>
            <person name="Zavolan M."/>
            <person name="Davis M.J."/>
            <person name="Wilming L.G."/>
            <person name="Aidinis V."/>
            <person name="Allen J.E."/>
            <person name="Ambesi-Impiombato A."/>
            <person name="Apweiler R."/>
            <person name="Aturaliya R.N."/>
            <person name="Bailey T.L."/>
            <person name="Bansal M."/>
            <person name="Baxter L."/>
            <person name="Beisel K.W."/>
            <person name="Bersano T."/>
            <person name="Bono H."/>
            <person name="Chalk A.M."/>
            <person name="Chiu K.P."/>
            <person name="Choudhary V."/>
            <person name="Christoffels A."/>
            <person name="Clutterbuck D.R."/>
            <person name="Crowe M.L."/>
            <person name="Dalla E."/>
            <person name="Dalrymple B.P."/>
            <person name="de Bono B."/>
            <person name="Della Gatta G."/>
            <person name="di Bernardo D."/>
            <person name="Down T."/>
            <person name="Engstrom P."/>
            <person name="Fagiolini M."/>
            <person name="Faulkner G."/>
            <person name="Fletcher C.F."/>
            <person name="Fukushima T."/>
            <person name="Furuno M."/>
            <person name="Futaki S."/>
            <person name="Gariboldi M."/>
            <person name="Georgii-Hemming P."/>
            <person name="Gingeras T.R."/>
            <person name="Gojobori T."/>
            <person name="Green R.E."/>
            <person name="Gustincich S."/>
            <person name="Harbers M."/>
            <person name="Hayashi Y."/>
            <person name="Hensch T.K."/>
            <person name="Hirokawa N."/>
            <person name="Hill D."/>
            <person name="Huminiecki L."/>
            <person name="Iacono M."/>
            <person name="Ikeo K."/>
            <person name="Iwama A."/>
            <person name="Ishikawa T."/>
            <person name="Jakt M."/>
            <person name="Kanapin A."/>
            <person name="Katoh M."/>
            <person name="Kawasawa Y."/>
            <person name="Kelso J."/>
            <person name="Kitamura H."/>
            <person name="Kitano H."/>
            <person name="Kollias G."/>
            <person name="Krishnan S.P."/>
            <person name="Kruger A."/>
            <person name="Kummerfeld S.K."/>
            <person name="Kurochkin I.V."/>
            <person name="Lareau L.F."/>
            <person name="Lazarevic D."/>
            <person name="Lipovich L."/>
            <person name="Liu J."/>
            <person name="Liuni S."/>
            <person name="McWilliam S."/>
            <person name="Madan Babu M."/>
            <person name="Madera M."/>
            <person name="Marchionni L."/>
            <person name="Matsuda H."/>
            <person name="Matsuzawa S."/>
            <person name="Miki H."/>
            <person name="Mignone F."/>
            <person name="Miyake S."/>
            <person name="Morris K."/>
            <person name="Mottagui-Tabar S."/>
            <person name="Mulder N."/>
            <person name="Nakano N."/>
            <person name="Nakauchi H."/>
            <person name="Ng P."/>
            <person name="Nilsson R."/>
            <person name="Nishiguchi S."/>
            <person name="Nishikawa S."/>
            <person name="Nori F."/>
            <person name="Ohara O."/>
            <person name="Okazaki Y."/>
            <person name="Orlando V."/>
            <person name="Pang K.C."/>
            <person name="Pavan W.J."/>
            <person name="Pavesi G."/>
            <person name="Pesole G."/>
            <person name="Petrovsky N."/>
            <person name="Piazza S."/>
            <person name="Reed J."/>
            <person name="Reid J.F."/>
            <person name="Ring B.Z."/>
            <person name="Ringwald M."/>
            <person name="Rost B."/>
            <person name="Ruan Y."/>
            <person name="Salzberg S.L."/>
            <person name="Sandelin A."/>
            <person name="Schneider C."/>
            <person name="Schoenbach C."/>
            <person name="Sekiguchi K."/>
            <person name="Semple C.A."/>
            <person name="Seno S."/>
            <person name="Sessa L."/>
            <person name="Sheng Y."/>
            <person name="Shibata Y."/>
            <person name="Shimada H."/>
            <person name="Shimada K."/>
            <person name="Silva D."/>
            <person name="Sinclair B."/>
            <person name="Sperling S."/>
            <person name="Stupka E."/>
            <person name="Sugiura K."/>
            <person name="Sultana R."/>
            <person name="Takenaka Y."/>
            <person name="Taki K."/>
            <person name="Tammoja K."/>
            <person name="Tan S.L."/>
            <person name="Tang S."/>
            <person name="Taylor M.S."/>
            <person name="Tegner J."/>
            <person name="Teichmann S.A."/>
            <person name="Ueda H.R."/>
            <person name="van Nimwegen E."/>
            <person name="Verardo R."/>
            <person name="Wei C.L."/>
            <person name="Yagi K."/>
            <person name="Yamanishi H."/>
            <person name="Zabarovsky E."/>
            <person name="Zhu S."/>
            <person name="Zimmer A."/>
            <person name="Hide W."/>
            <person name="Bult C."/>
            <person name="Grimmond S.M."/>
            <person name="Teasdale R.D."/>
            <person name="Liu E.T."/>
            <person name="Brusic V."/>
            <person name="Quackenbush J."/>
            <person name="Wahlestedt C."/>
            <person name="Mattick J.S."/>
            <person name="Hume D.A."/>
            <person name="Kai C."/>
            <person name="Sasaki D."/>
            <person name="Tomaru Y."/>
            <person name="Fukuda S."/>
            <person name="Kanamori-Katayama M."/>
            <person name="Suzuki M."/>
            <person name="Aoki J."/>
            <person name="Arakawa T."/>
            <person name="Iida J."/>
            <person name="Imamura K."/>
            <person name="Itoh M."/>
            <person name="Kato T."/>
            <person name="Kawaji H."/>
            <person name="Kawagashira N."/>
            <person name="Kawashima T."/>
            <person name="Kojima M."/>
            <person name="Kondo S."/>
            <person name="Konno H."/>
            <person name="Nakano K."/>
            <person name="Ninomiya N."/>
            <person name="Nishio T."/>
            <person name="Okada M."/>
            <person name="Plessy C."/>
            <person name="Shibata K."/>
            <person name="Shiraki T."/>
            <person name="Suzuki S."/>
            <person name="Tagami M."/>
            <person name="Waki K."/>
            <person name="Watahiki A."/>
            <person name="Okamura-Oho Y."/>
            <person name="Suzuki H."/>
            <person name="Kawai J."/>
            <person name="Hayashizaki Y."/>
        </authorList>
    </citation>
    <scope>NUCLEOTIDE SEQUENCE [LARGE SCALE MRNA] (ISOFORMS 2; 4 AND 5)</scope>
    <source>
        <strain>C57BL/6J</strain>
        <tissue>Corpus striatum</tissue>
        <tissue>Hippocampus</tissue>
        <tissue>Medulla oblongata</tissue>
        <tissue>Olfactory bulb</tissue>
    </source>
</reference>
<reference key="2">
    <citation type="journal article" date="2009" name="PLoS Biol.">
        <title>Lineage-specific biology revealed by a finished genome assembly of the mouse.</title>
        <authorList>
            <person name="Church D.M."/>
            <person name="Goodstadt L."/>
            <person name="Hillier L.W."/>
            <person name="Zody M.C."/>
            <person name="Goldstein S."/>
            <person name="She X."/>
            <person name="Bult C.J."/>
            <person name="Agarwala R."/>
            <person name="Cherry J.L."/>
            <person name="DiCuccio M."/>
            <person name="Hlavina W."/>
            <person name="Kapustin Y."/>
            <person name="Meric P."/>
            <person name="Maglott D."/>
            <person name="Birtle Z."/>
            <person name="Marques A.C."/>
            <person name="Graves T."/>
            <person name="Zhou S."/>
            <person name="Teague B."/>
            <person name="Potamousis K."/>
            <person name="Churas C."/>
            <person name="Place M."/>
            <person name="Herschleb J."/>
            <person name="Runnheim R."/>
            <person name="Forrest D."/>
            <person name="Amos-Landgraf J."/>
            <person name="Schwartz D.C."/>
            <person name="Cheng Z."/>
            <person name="Lindblad-Toh K."/>
            <person name="Eichler E.E."/>
            <person name="Ponting C.P."/>
        </authorList>
    </citation>
    <scope>NUCLEOTIDE SEQUENCE [LARGE SCALE GENOMIC DNA]</scope>
    <source>
        <strain>C57BL/6J</strain>
    </source>
</reference>
<reference key="3">
    <citation type="journal article" date="2004" name="Genome Res.">
        <title>The status, quality, and expansion of the NIH full-length cDNA project: the Mammalian Gene Collection (MGC).</title>
        <authorList>
            <consortium name="The MGC Project Team"/>
        </authorList>
    </citation>
    <scope>NUCLEOTIDE SEQUENCE [LARGE SCALE MRNA] (ISOFORM 3)</scope>
    <source>
        <strain>C57BL/6J</strain>
        <tissue>Brain</tissue>
    </source>
</reference>
<reference key="4">
    <citation type="journal article" date="2004" name="Mol. Cell. Proteomics">
        <title>Identification and verification of novel rodent postsynaptic density proteins.</title>
        <authorList>
            <person name="Jordan B.A."/>
            <person name="Fernholz B.D."/>
            <person name="Boussac M."/>
            <person name="Xu C."/>
            <person name="Grigorean G."/>
            <person name="Ziff E.B."/>
            <person name="Neubert T.A."/>
        </authorList>
    </citation>
    <scope>IDENTIFICATION BY MASS SPECTROMETRY (ISOFORM 4)</scope>
    <scope>SUBCELLULAR LOCATION</scope>
</reference>
<reference key="5">
    <citation type="journal article" date="2007" name="Mol. Cell. Biol.">
        <title>Identification of phosphotyrosine binding domain-containing proteins as novel downstream targets of the EphA8 signaling function.</title>
        <authorList>
            <person name="Shin J."/>
            <person name="Gu C."/>
            <person name="Park E."/>
            <person name="Park S."/>
        </authorList>
    </citation>
    <scope>INTERACTION WITH EPHA8</scope>
</reference>
<reference key="6">
    <citation type="journal article" date="2008" name="J. Proteome Res.">
        <title>Large-scale identification and evolution indexing of tyrosine phosphorylation sites from murine brain.</title>
        <authorList>
            <person name="Ballif B.A."/>
            <person name="Carey G.R."/>
            <person name="Sunyaev S.R."/>
            <person name="Gygi S.P."/>
        </authorList>
    </citation>
    <scope>PHOSPHORYLATION [LARGE SCALE ANALYSIS] AT TYR-900 AND TYR-1006</scope>
    <scope>IDENTIFICATION BY MASS SPECTROMETRY [LARGE SCALE ANALYSIS]</scope>
    <source>
        <tissue>Brain</tissue>
    </source>
</reference>
<reference key="7">
    <citation type="journal article" date="2010" name="Cell">
        <title>A tissue-specific atlas of mouse protein phosphorylation and expression.</title>
        <authorList>
            <person name="Huttlin E.L."/>
            <person name="Jedrychowski M.P."/>
            <person name="Elias J.E."/>
            <person name="Goswami T."/>
            <person name="Rad R."/>
            <person name="Beausoleil S.A."/>
            <person name="Villen J."/>
            <person name="Haas W."/>
            <person name="Sowa M.E."/>
            <person name="Gygi S.P."/>
        </authorList>
    </citation>
    <scope>PHOSPHORYLATION [LARGE SCALE ANALYSIS] AT SER-310; SER-311; SER-315; SER-353; THR-503; SER-507; SER-510; SER-738 AND SER-973</scope>
    <scope>IDENTIFICATION BY MASS SPECTROMETRY [LARGE SCALE ANALYSIS]</scope>
    <source>
        <tissue>Brain</tissue>
    </source>
</reference>
<protein>
    <recommendedName>
        <fullName>Ankyrin repeat and sterile alpha motif domain-containing protein 1B</fullName>
    </recommendedName>
    <alternativeName>
        <fullName>Amyloid-beta protein intracellular domain-associated protein 1</fullName>
        <shortName>AIDA-1</shortName>
    </alternativeName>
    <alternativeName>
        <fullName>E2A-PBX1-associated protein</fullName>
        <shortName>EB-1</shortName>
    </alternativeName>
</protein>
<sequence>MGKDQELLEAARTGNVALVEKLLSGRKGGILGGGSGPLPLSNLLSIWRGPNVNCTDSSGYTALHHAALNGHKDIVLKLLQYEASTNVADNKGYFPIHLAAWKGDVEIVKILIHHGPSHSRVNEQNNENETALHCAAQYGHSEVVAVLLEELTDPTIRNSKLETPLDLAALYGRLRVVKMIISAHPNLMSCNTRKHTPLHLAARNGHKAVVQVLLEAGMDVSCQTEKGSALHEAALFGKVDVVRVLLETGIDANIKDSLGRTVLDILKEHPSQKSLQIATLLQDYLEGAGRSAAVLEEHAQEDTAQETHLSSPAESPQKTKSETVTGELSKLLDEIKLCQEKDYSFEDLCHTISDHYLDNLSKISEEELGKNGSQSVRTSSTINLSPGEVEDEEEDPNSCGPTGLWEALTPCNGCRNLGFPMLAQESYPKKRNFPMEMEPSASLDTFPSENENFLCELVDTAVTKKPCSLEIARAPSPRTDNASEVAITAPGTSHHRNSSTGPTPDCSPPSPDTALKNIVKVIRPQPKQRTSIVSSLDFQRMNHNQEYFEISTSTGCTSFTSSPAASPPTSSVETTEVKNEGAEHADDLSQQEDDEPPKEYDAGQFAGLLHGSSPACESPENPFHLYGKRNTCEDGPDEASLANSPLPFKQTPIENNPEPSVKKVKPKVVSRTIFHKRNHQLENHTIVGTRMSRSGSRNGDQWGVNPGGFVERACTLGRIRSLPKALIDMHLSKNVSKSDSDLIAYPSKDKARVNWSKSSTAERSSKDNSERTPSFTSEWEEIDKIMNSIDVGINSELEGMNGETTRPRCPVQTVGQWLESIGLPQYENHLMANGFDSVQFMGSNVMEDQDLLEIGILNSGHRQRILQAIQLLPKMRPIGHDGYHPTSVAEWLDSIELGDYTKAFLINGYTSMDLLKKIWELELINVLKISLIGHRKRILASLGDRLHDDPPQKPPRSITLREPSGNHTPPQLSPSLSQSTYTTGGSLDVPHIIMQGDARRRRNENYFDDIPRSKLERQMAQTGDWGEPSITLRPPNEATASTPVQYWQHHPEKLIFQSCDYKAFYLGSMLIKELRGTESTQDACAKMRANCRKSTEQMKKVPTIILSVSYKGVKFIDAANKNIIAEHEIRNISCAAQDPEDLSTFAYITKDLKSNHHYCHVFTAFDVNLAYEIILTLGQAFEVAYQLALQARKGGHSSTLPESFENKPSKPIPKPRVSIRKSVQIDPSEQKTLANLPWIVEPGQEAKRGINTKYETTIF</sequence>
<evidence type="ECO:0000250" key="1"/>
<evidence type="ECO:0000250" key="2">
    <source>
        <dbReference type="UniProtKB" id="P0C6S7"/>
    </source>
</evidence>
<evidence type="ECO:0000255" key="3">
    <source>
        <dbReference type="PROSITE-ProRule" id="PRU00148"/>
    </source>
</evidence>
<evidence type="ECO:0000255" key="4">
    <source>
        <dbReference type="PROSITE-ProRule" id="PRU00184"/>
    </source>
</evidence>
<evidence type="ECO:0000256" key="5">
    <source>
        <dbReference type="SAM" id="MobiDB-lite"/>
    </source>
</evidence>
<evidence type="ECO:0000303" key="6">
    <source>
    </source>
</evidence>
<evidence type="ECO:0000303" key="7">
    <source>
    </source>
</evidence>
<evidence type="ECO:0000305" key="8"/>
<evidence type="ECO:0007744" key="9">
    <source>
    </source>
</evidence>
<evidence type="ECO:0007744" key="10">
    <source>
    </source>
</evidence>
<dbReference type="EMBL" id="AK032061">
    <property type="protein sequence ID" value="BAC27677.1"/>
    <property type="molecule type" value="mRNA"/>
</dbReference>
<dbReference type="EMBL" id="AK032211">
    <property type="protein sequence ID" value="BAC27761.1"/>
    <property type="molecule type" value="mRNA"/>
</dbReference>
<dbReference type="EMBL" id="AK049899">
    <property type="protein sequence ID" value="BAC33978.1"/>
    <property type="molecule type" value="mRNA"/>
</dbReference>
<dbReference type="EMBL" id="AK163750">
    <property type="protein sequence ID" value="BAE37478.1"/>
    <property type="molecule type" value="mRNA"/>
</dbReference>
<dbReference type="EMBL" id="AC107661">
    <property type="status" value="NOT_ANNOTATED_CDS"/>
    <property type="molecule type" value="Genomic_DNA"/>
</dbReference>
<dbReference type="EMBL" id="AC122212">
    <property type="status" value="NOT_ANNOTATED_CDS"/>
    <property type="molecule type" value="Genomic_DNA"/>
</dbReference>
<dbReference type="EMBL" id="AC132093">
    <property type="status" value="NOT_ANNOTATED_CDS"/>
    <property type="molecule type" value="Genomic_DNA"/>
</dbReference>
<dbReference type="EMBL" id="AC132131">
    <property type="status" value="NOT_ANNOTATED_CDS"/>
    <property type="molecule type" value="Genomic_DNA"/>
</dbReference>
<dbReference type="EMBL" id="AC132328">
    <property type="status" value="NOT_ANNOTATED_CDS"/>
    <property type="molecule type" value="Genomic_DNA"/>
</dbReference>
<dbReference type="EMBL" id="AC132465">
    <property type="status" value="NOT_ANNOTATED_CDS"/>
    <property type="molecule type" value="Genomic_DNA"/>
</dbReference>
<dbReference type="EMBL" id="AC138719">
    <property type="status" value="NOT_ANNOTATED_CDS"/>
    <property type="molecule type" value="Genomic_DNA"/>
</dbReference>
<dbReference type="EMBL" id="AC151984">
    <property type="status" value="NOT_ANNOTATED_CDS"/>
    <property type="molecule type" value="Genomic_DNA"/>
</dbReference>
<dbReference type="EMBL" id="AC134539">
    <property type="status" value="NOT_ANNOTATED_CDS"/>
    <property type="molecule type" value="Genomic_DNA"/>
</dbReference>
<dbReference type="EMBL" id="BC098373">
    <property type="protein sequence ID" value="AAH98373.1"/>
    <property type="molecule type" value="mRNA"/>
</dbReference>
<dbReference type="CCDS" id="CCDS59552.1">
    <molecule id="Q8BIZ1-4"/>
</dbReference>
<dbReference type="CCDS" id="CCDS59553.1">
    <molecule id="Q8BIZ1-2"/>
</dbReference>
<dbReference type="CCDS" id="CCDS59554.1">
    <molecule id="Q8BIZ1-3"/>
</dbReference>
<dbReference type="CCDS" id="CCDS83746.1">
    <molecule id="Q8BIZ1-5"/>
</dbReference>
<dbReference type="RefSeq" id="NP_001170868.1">
    <property type="nucleotide sequence ID" value="NM_001177397.1"/>
</dbReference>
<dbReference type="RefSeq" id="NP_001170869.1">
    <property type="nucleotide sequence ID" value="NM_001177398.1"/>
</dbReference>
<dbReference type="RefSeq" id="NP_001333982.1">
    <property type="nucleotide sequence ID" value="NM_001347053.1"/>
</dbReference>
<dbReference type="RefSeq" id="NP_001333983.1">
    <property type="nucleotide sequence ID" value="NM_001347054.1"/>
</dbReference>
<dbReference type="RefSeq" id="NP_852063.1">
    <property type="nucleotide sequence ID" value="NM_181398.3"/>
</dbReference>
<dbReference type="PDB" id="8YM2">
    <property type="method" value="X-ray"/>
    <property type="resolution" value="2.00 A"/>
    <property type="chains" value="A=1036-1193"/>
</dbReference>
<dbReference type="PDBsum" id="8YM2"/>
<dbReference type="SMR" id="Q8BIZ1"/>
<dbReference type="BioGRID" id="218749">
    <property type="interactions" value="9"/>
</dbReference>
<dbReference type="FunCoup" id="Q8BIZ1">
    <property type="interactions" value="501"/>
</dbReference>
<dbReference type="IntAct" id="Q8BIZ1">
    <property type="interactions" value="153"/>
</dbReference>
<dbReference type="MINT" id="Q8BIZ1"/>
<dbReference type="STRING" id="10090.ENSMUSP00000138655"/>
<dbReference type="GlyGen" id="Q8BIZ1">
    <property type="glycosylation" value="6 sites, 1 N-linked glycan (1 site), 1 O-linked glycan (4 sites)"/>
</dbReference>
<dbReference type="iPTMnet" id="Q8BIZ1"/>
<dbReference type="PhosphoSitePlus" id="Q8BIZ1"/>
<dbReference type="SwissPalm" id="Q8BIZ1"/>
<dbReference type="PaxDb" id="10090-ENSMUSP00000138539"/>
<dbReference type="PeptideAtlas" id="Q8BIZ1"/>
<dbReference type="ProteomicsDB" id="281886">
    <molecule id="Q8BIZ1-1"/>
</dbReference>
<dbReference type="ProteomicsDB" id="281887">
    <molecule id="Q8BIZ1-2"/>
</dbReference>
<dbReference type="ProteomicsDB" id="281888">
    <molecule id="Q8BIZ1-3"/>
</dbReference>
<dbReference type="ProteomicsDB" id="281889">
    <molecule id="Q8BIZ1-4"/>
</dbReference>
<dbReference type="ProteomicsDB" id="281890">
    <molecule id="Q8BIZ1-5"/>
</dbReference>
<dbReference type="GeneID" id="77531"/>
<dbReference type="KEGG" id="mmu:77531"/>
<dbReference type="UCSC" id="uc033fry.1">
    <molecule id="Q8BIZ1-4"/>
    <property type="organism name" value="mouse"/>
</dbReference>
<dbReference type="UCSC" id="uc033frz.1">
    <molecule id="Q8BIZ1-2"/>
    <property type="organism name" value="mouse"/>
</dbReference>
<dbReference type="AGR" id="MGI:1924781"/>
<dbReference type="CTD" id="56899"/>
<dbReference type="MGI" id="MGI:1924781">
    <property type="gene designation" value="Anks1b"/>
</dbReference>
<dbReference type="eggNOG" id="KOG0507">
    <property type="taxonomic scope" value="Eukaryota"/>
</dbReference>
<dbReference type="InParanoid" id="Q8BIZ1"/>
<dbReference type="BioGRID-ORCS" id="77531">
    <property type="hits" value="1 hit in 74 CRISPR screens"/>
</dbReference>
<dbReference type="CD-CODE" id="CE726F99">
    <property type="entry name" value="Postsynaptic density"/>
</dbReference>
<dbReference type="ChiTaRS" id="Anks1b">
    <property type="organism name" value="mouse"/>
</dbReference>
<dbReference type="PRO" id="PR:Q8BIZ1"/>
<dbReference type="Proteomes" id="UP000000589">
    <property type="component" value="Unplaced"/>
</dbReference>
<dbReference type="RNAct" id="Q8BIZ1">
    <property type="molecule type" value="protein"/>
</dbReference>
<dbReference type="GO" id="GO:0005737">
    <property type="term" value="C:cytoplasm"/>
    <property type="evidence" value="ECO:0007669"/>
    <property type="project" value="UniProtKB-SubCell"/>
</dbReference>
<dbReference type="GO" id="GO:0043197">
    <property type="term" value="C:dendritic spine"/>
    <property type="evidence" value="ECO:0007669"/>
    <property type="project" value="UniProtKB-SubCell"/>
</dbReference>
<dbReference type="GO" id="GO:0005634">
    <property type="term" value="C:nucleus"/>
    <property type="evidence" value="ECO:0007669"/>
    <property type="project" value="UniProtKB-SubCell"/>
</dbReference>
<dbReference type="GO" id="GO:0014069">
    <property type="term" value="C:postsynaptic density"/>
    <property type="evidence" value="ECO:0007669"/>
    <property type="project" value="UniProtKB-SubCell"/>
</dbReference>
<dbReference type="GO" id="GO:0098685">
    <property type="term" value="C:Schaffer collateral - CA1 synapse"/>
    <property type="evidence" value="ECO:0000314"/>
    <property type="project" value="SynGO"/>
</dbReference>
<dbReference type="GO" id="GO:0099565">
    <property type="term" value="P:chemical synaptic transmission, postsynaptic"/>
    <property type="evidence" value="ECO:0000314"/>
    <property type="project" value="SynGO"/>
</dbReference>
<dbReference type="GO" id="GO:0097120">
    <property type="term" value="P:receptor localization to synapse"/>
    <property type="evidence" value="ECO:0000266"/>
    <property type="project" value="MGI"/>
</dbReference>
<dbReference type="GO" id="GO:1900383">
    <property type="term" value="P:regulation of synaptic plasticity by receptor localization to synapse"/>
    <property type="evidence" value="ECO:0000315"/>
    <property type="project" value="MGI"/>
</dbReference>
<dbReference type="CDD" id="cd01274">
    <property type="entry name" value="PTB_Anks"/>
    <property type="match status" value="1"/>
</dbReference>
<dbReference type="CDD" id="cd09499">
    <property type="entry name" value="SAM_AIDA1AB-like_repeat1"/>
    <property type="match status" value="1"/>
</dbReference>
<dbReference type="CDD" id="cd09500">
    <property type="entry name" value="SAM_AIDA1AB-like_repeat2"/>
    <property type="match status" value="1"/>
</dbReference>
<dbReference type="FunFam" id="1.10.150.50:FF:000016">
    <property type="entry name" value="Ankyrin repeat and sterile alpha motif domain-containing protein 1B"/>
    <property type="match status" value="1"/>
</dbReference>
<dbReference type="FunFam" id="2.30.29.30:FF:000045">
    <property type="entry name" value="Ankyrin repeat and sterile alpha motif domain-containing protein 1B"/>
    <property type="match status" value="1"/>
</dbReference>
<dbReference type="FunFam" id="1.10.150.50:FF:000015">
    <property type="entry name" value="ankyrin repeat and sterile alpha motif domain-containing protein 1B"/>
    <property type="match status" value="1"/>
</dbReference>
<dbReference type="FunFam" id="1.25.40.20:FF:000136">
    <property type="entry name" value="ankyrin repeat and sterile alpha motif domain-containing protein 1B isoform X1"/>
    <property type="match status" value="1"/>
</dbReference>
<dbReference type="FunFam" id="1.25.40.20:FF:000099">
    <property type="entry name" value="ankyrin repeat and sterile alpha motif domain-containing protein 1B isoform X5"/>
    <property type="match status" value="1"/>
</dbReference>
<dbReference type="Gene3D" id="1.25.40.20">
    <property type="entry name" value="Ankyrin repeat-containing domain"/>
    <property type="match status" value="2"/>
</dbReference>
<dbReference type="Gene3D" id="2.30.29.30">
    <property type="entry name" value="Pleckstrin-homology domain (PH domain)/Phosphotyrosine-binding domain (PTB)"/>
    <property type="match status" value="1"/>
</dbReference>
<dbReference type="Gene3D" id="1.10.150.50">
    <property type="entry name" value="Transcription Factor, Ets-1"/>
    <property type="match status" value="2"/>
</dbReference>
<dbReference type="InterPro" id="IPR033635">
    <property type="entry name" value="ANKS1/Caskin"/>
</dbReference>
<dbReference type="InterPro" id="IPR002110">
    <property type="entry name" value="Ankyrin_rpt"/>
</dbReference>
<dbReference type="InterPro" id="IPR036770">
    <property type="entry name" value="Ankyrin_rpt-contain_sf"/>
</dbReference>
<dbReference type="InterPro" id="IPR011993">
    <property type="entry name" value="PH-like_dom_sf"/>
</dbReference>
<dbReference type="InterPro" id="IPR006020">
    <property type="entry name" value="PTB/PI_dom"/>
</dbReference>
<dbReference type="InterPro" id="IPR001660">
    <property type="entry name" value="SAM"/>
</dbReference>
<dbReference type="InterPro" id="IPR013761">
    <property type="entry name" value="SAM/pointed_sf"/>
</dbReference>
<dbReference type="InterPro" id="IPR041880">
    <property type="entry name" value="SAM_ANKS1_repeat1"/>
</dbReference>
<dbReference type="InterPro" id="IPR041882">
    <property type="entry name" value="SAM_ANKS1_repeat2"/>
</dbReference>
<dbReference type="PANTHER" id="PTHR24174">
    <property type="entry name" value="ANKYRIN REPEAT AND STERILE ALPHA MOTIF DOMAIN-CONTAINING PROTEIN 1"/>
    <property type="match status" value="1"/>
</dbReference>
<dbReference type="PANTHER" id="PTHR24174:SF3">
    <property type="entry name" value="ANKYRIN REPEAT AND STERILE ALPHA MOTIF DOMAIN-CONTAINING PROTEIN 1B"/>
    <property type="match status" value="1"/>
</dbReference>
<dbReference type="Pfam" id="PF12796">
    <property type="entry name" value="Ank_2"/>
    <property type="match status" value="3"/>
</dbReference>
<dbReference type="Pfam" id="PF00640">
    <property type="entry name" value="PID"/>
    <property type="match status" value="1"/>
</dbReference>
<dbReference type="Pfam" id="PF00536">
    <property type="entry name" value="SAM_1"/>
    <property type="match status" value="2"/>
</dbReference>
<dbReference type="PRINTS" id="PR01415">
    <property type="entry name" value="ANKYRIN"/>
</dbReference>
<dbReference type="SMART" id="SM00248">
    <property type="entry name" value="ANK"/>
    <property type="match status" value="6"/>
</dbReference>
<dbReference type="SMART" id="SM00462">
    <property type="entry name" value="PTB"/>
    <property type="match status" value="1"/>
</dbReference>
<dbReference type="SMART" id="SM00454">
    <property type="entry name" value="SAM"/>
    <property type="match status" value="2"/>
</dbReference>
<dbReference type="SUPFAM" id="SSF48403">
    <property type="entry name" value="Ankyrin repeat"/>
    <property type="match status" value="1"/>
</dbReference>
<dbReference type="SUPFAM" id="SSF50729">
    <property type="entry name" value="PH domain-like"/>
    <property type="match status" value="1"/>
</dbReference>
<dbReference type="SUPFAM" id="SSF47769">
    <property type="entry name" value="SAM/Pointed domain"/>
    <property type="match status" value="2"/>
</dbReference>
<dbReference type="PROSITE" id="PS50297">
    <property type="entry name" value="ANK_REP_REGION"/>
    <property type="match status" value="1"/>
</dbReference>
<dbReference type="PROSITE" id="PS50088">
    <property type="entry name" value="ANK_REPEAT"/>
    <property type="match status" value="5"/>
</dbReference>
<dbReference type="PROSITE" id="PS01179">
    <property type="entry name" value="PID"/>
    <property type="match status" value="1"/>
</dbReference>
<dbReference type="PROSITE" id="PS50105">
    <property type="entry name" value="SAM_DOMAIN"/>
    <property type="match status" value="2"/>
</dbReference>
<organism>
    <name type="scientific">Mus musculus</name>
    <name type="common">Mouse</name>
    <dbReference type="NCBI Taxonomy" id="10090"/>
    <lineage>
        <taxon>Eukaryota</taxon>
        <taxon>Metazoa</taxon>
        <taxon>Chordata</taxon>
        <taxon>Craniata</taxon>
        <taxon>Vertebrata</taxon>
        <taxon>Euteleostomi</taxon>
        <taxon>Mammalia</taxon>
        <taxon>Eutheria</taxon>
        <taxon>Euarchontoglires</taxon>
        <taxon>Glires</taxon>
        <taxon>Rodentia</taxon>
        <taxon>Myomorpha</taxon>
        <taxon>Muroidea</taxon>
        <taxon>Muridae</taxon>
        <taxon>Murinae</taxon>
        <taxon>Mus</taxon>
        <taxon>Mus</taxon>
    </lineage>
</organism>
<name>ANS1B_MOUSE</name>
<proteinExistence type="evidence at protein level"/>
<keyword id="KW-0002">3D-structure</keyword>
<keyword id="KW-0025">Alternative splicing</keyword>
<keyword id="KW-0040">ANK repeat</keyword>
<keyword id="KW-0966">Cell projection</keyword>
<keyword id="KW-0963">Cytoplasm</keyword>
<keyword id="KW-0539">Nucleus</keyword>
<keyword id="KW-0597">Phosphoprotein</keyword>
<keyword id="KW-1185">Reference proteome</keyword>
<keyword id="KW-0677">Repeat</keyword>
<keyword id="KW-0770">Synapse</keyword>
<accession>Q8BIZ1</accession>
<accession>E9Q644</accession>
<accession>Q4KMR9</accession>
<accession>Q8BJ47</accession>
<accession>Q8BJ49</accession>